<sequence>MHRIDVKILDDRLRTHEPAYATPGAAGLDLRACLNAPVTLHPGETTLIPSGLAIHLADPGLAAMVLPRSGLGHKHGIVLGNLVGLIDSDYQGQIFVSAWNRGRETFTVQPMERIAQLVVVPVLQVGFNIVDEFPQSDRGAAGFGSTGKH</sequence>
<organism>
    <name type="scientific">Aromatoleum aromaticum (strain DSM 19018 / LMG 30748 / EbN1)</name>
    <name type="common">Azoarcus sp. (strain EbN1)</name>
    <dbReference type="NCBI Taxonomy" id="76114"/>
    <lineage>
        <taxon>Bacteria</taxon>
        <taxon>Pseudomonadati</taxon>
        <taxon>Pseudomonadota</taxon>
        <taxon>Betaproteobacteria</taxon>
        <taxon>Rhodocyclales</taxon>
        <taxon>Rhodocyclaceae</taxon>
        <taxon>Aromatoleum</taxon>
    </lineage>
</organism>
<dbReference type="EC" id="3.6.1.23" evidence="1"/>
<dbReference type="EMBL" id="CR555306">
    <property type="protein sequence ID" value="CAI06562.1"/>
    <property type="molecule type" value="Genomic_DNA"/>
</dbReference>
<dbReference type="RefSeq" id="WP_011236295.1">
    <property type="nucleotide sequence ID" value="NC_006513.1"/>
</dbReference>
<dbReference type="SMR" id="Q5P7Z9"/>
<dbReference type="STRING" id="76114.ebA837"/>
<dbReference type="KEGG" id="eba:ebA837"/>
<dbReference type="eggNOG" id="COG0756">
    <property type="taxonomic scope" value="Bacteria"/>
</dbReference>
<dbReference type="HOGENOM" id="CLU_068508_1_1_4"/>
<dbReference type="OrthoDB" id="9809956at2"/>
<dbReference type="UniPathway" id="UPA00610">
    <property type="reaction ID" value="UER00666"/>
</dbReference>
<dbReference type="Proteomes" id="UP000006552">
    <property type="component" value="Chromosome"/>
</dbReference>
<dbReference type="GO" id="GO:0004170">
    <property type="term" value="F:dUTP diphosphatase activity"/>
    <property type="evidence" value="ECO:0007669"/>
    <property type="project" value="UniProtKB-UniRule"/>
</dbReference>
<dbReference type="GO" id="GO:0000287">
    <property type="term" value="F:magnesium ion binding"/>
    <property type="evidence" value="ECO:0007669"/>
    <property type="project" value="UniProtKB-UniRule"/>
</dbReference>
<dbReference type="GO" id="GO:0006226">
    <property type="term" value="P:dUMP biosynthetic process"/>
    <property type="evidence" value="ECO:0007669"/>
    <property type="project" value="UniProtKB-UniRule"/>
</dbReference>
<dbReference type="GO" id="GO:0046081">
    <property type="term" value="P:dUTP catabolic process"/>
    <property type="evidence" value="ECO:0007669"/>
    <property type="project" value="InterPro"/>
</dbReference>
<dbReference type="CDD" id="cd07557">
    <property type="entry name" value="trimeric_dUTPase"/>
    <property type="match status" value="1"/>
</dbReference>
<dbReference type="FunFam" id="2.70.40.10:FF:000002">
    <property type="entry name" value="dUTP diphosphatase"/>
    <property type="match status" value="1"/>
</dbReference>
<dbReference type="Gene3D" id="2.70.40.10">
    <property type="match status" value="1"/>
</dbReference>
<dbReference type="HAMAP" id="MF_00116">
    <property type="entry name" value="dUTPase_bact"/>
    <property type="match status" value="1"/>
</dbReference>
<dbReference type="InterPro" id="IPR008181">
    <property type="entry name" value="dUTPase"/>
</dbReference>
<dbReference type="InterPro" id="IPR029054">
    <property type="entry name" value="dUTPase-like"/>
</dbReference>
<dbReference type="InterPro" id="IPR036157">
    <property type="entry name" value="dUTPase-like_sf"/>
</dbReference>
<dbReference type="InterPro" id="IPR033704">
    <property type="entry name" value="dUTPase_trimeric"/>
</dbReference>
<dbReference type="NCBIfam" id="TIGR00576">
    <property type="entry name" value="dut"/>
    <property type="match status" value="1"/>
</dbReference>
<dbReference type="NCBIfam" id="NF001862">
    <property type="entry name" value="PRK00601.1"/>
    <property type="match status" value="1"/>
</dbReference>
<dbReference type="PANTHER" id="PTHR11241">
    <property type="entry name" value="DEOXYURIDINE 5'-TRIPHOSPHATE NUCLEOTIDOHYDROLASE"/>
    <property type="match status" value="1"/>
</dbReference>
<dbReference type="PANTHER" id="PTHR11241:SF0">
    <property type="entry name" value="DEOXYURIDINE 5'-TRIPHOSPHATE NUCLEOTIDOHYDROLASE"/>
    <property type="match status" value="1"/>
</dbReference>
<dbReference type="Pfam" id="PF00692">
    <property type="entry name" value="dUTPase"/>
    <property type="match status" value="1"/>
</dbReference>
<dbReference type="SUPFAM" id="SSF51283">
    <property type="entry name" value="dUTPase-like"/>
    <property type="match status" value="1"/>
</dbReference>
<proteinExistence type="inferred from homology"/>
<evidence type="ECO:0000255" key="1">
    <source>
        <dbReference type="HAMAP-Rule" id="MF_00116"/>
    </source>
</evidence>
<protein>
    <recommendedName>
        <fullName evidence="1">Deoxyuridine 5'-triphosphate nucleotidohydrolase</fullName>
        <shortName evidence="1">dUTPase</shortName>
        <ecNumber evidence="1">3.6.1.23</ecNumber>
    </recommendedName>
    <alternativeName>
        <fullName evidence="1">dUTP pyrophosphatase</fullName>
    </alternativeName>
</protein>
<reference key="1">
    <citation type="journal article" date="2005" name="Arch. Microbiol.">
        <title>The genome sequence of an anaerobic aromatic-degrading denitrifying bacterium, strain EbN1.</title>
        <authorList>
            <person name="Rabus R."/>
            <person name="Kube M."/>
            <person name="Heider J."/>
            <person name="Beck A."/>
            <person name="Heitmann K."/>
            <person name="Widdel F."/>
            <person name="Reinhardt R."/>
        </authorList>
    </citation>
    <scope>NUCLEOTIDE SEQUENCE [LARGE SCALE GENOMIC DNA]</scope>
    <source>
        <strain>DSM 19018 / LMG 30748 / EbN1</strain>
    </source>
</reference>
<gene>
    <name evidence="1" type="primary">dut</name>
    <name type="ordered locus">AZOSEA04400</name>
    <name type="ORF">ebA837</name>
</gene>
<feature type="chain" id="PRO_0000231397" description="Deoxyuridine 5'-triphosphate nucleotidohydrolase">
    <location>
        <begin position="1"/>
        <end position="149"/>
    </location>
</feature>
<feature type="binding site" evidence="1">
    <location>
        <begin position="68"/>
        <end position="70"/>
    </location>
    <ligand>
        <name>substrate</name>
    </ligand>
</feature>
<feature type="binding site" evidence="1">
    <location>
        <position position="81"/>
    </location>
    <ligand>
        <name>substrate</name>
    </ligand>
</feature>
<feature type="binding site" evidence="1">
    <location>
        <begin position="85"/>
        <end position="87"/>
    </location>
    <ligand>
        <name>substrate</name>
    </ligand>
</feature>
<accession>Q5P7Z9</accession>
<keyword id="KW-0378">Hydrolase</keyword>
<keyword id="KW-0460">Magnesium</keyword>
<keyword id="KW-0479">Metal-binding</keyword>
<keyword id="KW-0546">Nucleotide metabolism</keyword>
<keyword id="KW-1185">Reference proteome</keyword>
<comment type="function">
    <text evidence="1">This enzyme is involved in nucleotide metabolism: it produces dUMP, the immediate precursor of thymidine nucleotides and it decreases the intracellular concentration of dUTP so that uracil cannot be incorporated into DNA.</text>
</comment>
<comment type="catalytic activity">
    <reaction evidence="1">
        <text>dUTP + H2O = dUMP + diphosphate + H(+)</text>
        <dbReference type="Rhea" id="RHEA:10248"/>
        <dbReference type="ChEBI" id="CHEBI:15377"/>
        <dbReference type="ChEBI" id="CHEBI:15378"/>
        <dbReference type="ChEBI" id="CHEBI:33019"/>
        <dbReference type="ChEBI" id="CHEBI:61555"/>
        <dbReference type="ChEBI" id="CHEBI:246422"/>
        <dbReference type="EC" id="3.6.1.23"/>
    </reaction>
</comment>
<comment type="cofactor">
    <cofactor evidence="1">
        <name>Mg(2+)</name>
        <dbReference type="ChEBI" id="CHEBI:18420"/>
    </cofactor>
</comment>
<comment type="pathway">
    <text evidence="1">Pyrimidine metabolism; dUMP biosynthesis; dUMP from dCTP (dUTP route): step 2/2.</text>
</comment>
<comment type="similarity">
    <text evidence="1">Belongs to the dUTPase family.</text>
</comment>
<name>DUT_AROAE</name>